<feature type="chain" id="PRO_0000153554" description="Small ribosomal subunit protein eS1">
    <location>
        <begin position="1"/>
        <end position="209"/>
    </location>
</feature>
<gene>
    <name evidence="1" type="primary">rps3ae</name>
    <name type="ordered locus">PTO1524</name>
</gene>
<keyword id="KW-0687">Ribonucleoprotein</keyword>
<keyword id="KW-0689">Ribosomal protein</keyword>
<reference key="1">
    <citation type="journal article" date="2004" name="Proc. Natl. Acad. Sci. U.S.A.">
        <title>Genome sequence of Picrophilus torridus and its implications for life around pH 0.</title>
        <authorList>
            <person name="Fuetterer O."/>
            <person name="Angelov A."/>
            <person name="Liesegang H."/>
            <person name="Gottschalk G."/>
            <person name="Schleper C."/>
            <person name="Schepers B."/>
            <person name="Dock C."/>
            <person name="Antranikian G."/>
            <person name="Liebl W."/>
        </authorList>
    </citation>
    <scope>NUCLEOTIDE SEQUENCE [LARGE SCALE GENOMIC DNA]</scope>
    <source>
        <strain>ATCC 700027 / DSM 9790 / JCM 10055 / NBRC 100828 / KAW 2/3</strain>
    </source>
</reference>
<name>RS3A_PICTO</name>
<proteinExistence type="inferred from homology"/>
<evidence type="ECO:0000255" key="1">
    <source>
        <dbReference type="HAMAP-Rule" id="MF_00359"/>
    </source>
</evidence>
<evidence type="ECO:0000305" key="2"/>
<accession>Q6KYU3</accession>
<organism>
    <name type="scientific">Picrophilus torridus (strain ATCC 700027 / DSM 9790 / JCM 10055 / NBRC 100828 / KAW 2/3)</name>
    <dbReference type="NCBI Taxonomy" id="1122961"/>
    <lineage>
        <taxon>Archaea</taxon>
        <taxon>Methanobacteriati</taxon>
        <taxon>Thermoplasmatota</taxon>
        <taxon>Thermoplasmata</taxon>
        <taxon>Thermoplasmatales</taxon>
        <taxon>Picrophilaceae</taxon>
        <taxon>Picrophilus</taxon>
    </lineage>
</organism>
<comment type="similarity">
    <text evidence="1">Belongs to the eukaryotic ribosomal protein eS1 family.</text>
</comment>
<sequence length="209" mass="23846">MADRRKIGTKDKWKEKTWYTIVAPSFLGEREIALSPAADPSLMIGRKVEVPVSDFTGNFRKSSTMVIFRVKECTGKRCTTEFIGHKVSDDTIRRMVRRRKERIDIIMPSKTKDGYRLVIKIVLVSDSKLTANKRGEVRSKIIGFINERCGSMTLPELAQYIIGDNVYNDIVDTLKDVYPIKKIEIRKSEVLGRDGYVEEPGAQTQIEAQ</sequence>
<dbReference type="EMBL" id="AE017261">
    <property type="protein sequence ID" value="AAT44109.1"/>
    <property type="molecule type" value="Genomic_DNA"/>
</dbReference>
<dbReference type="RefSeq" id="WP_011178325.1">
    <property type="nucleotide sequence ID" value="NC_005877.1"/>
</dbReference>
<dbReference type="SMR" id="Q6KYU3"/>
<dbReference type="FunCoup" id="Q6KYU3">
    <property type="interactions" value="152"/>
</dbReference>
<dbReference type="STRING" id="263820.PTO1524"/>
<dbReference type="PaxDb" id="263820-PTO1524"/>
<dbReference type="GeneID" id="2844985"/>
<dbReference type="KEGG" id="pto:PTO1524"/>
<dbReference type="eggNOG" id="arCOG04186">
    <property type="taxonomic scope" value="Archaea"/>
</dbReference>
<dbReference type="HOGENOM" id="CLU_062507_1_0_2"/>
<dbReference type="InParanoid" id="Q6KYU3"/>
<dbReference type="OrthoDB" id="30639at2157"/>
<dbReference type="Proteomes" id="UP000000438">
    <property type="component" value="Chromosome"/>
</dbReference>
<dbReference type="GO" id="GO:1990904">
    <property type="term" value="C:ribonucleoprotein complex"/>
    <property type="evidence" value="ECO:0007669"/>
    <property type="project" value="UniProtKB-KW"/>
</dbReference>
<dbReference type="GO" id="GO:0005840">
    <property type="term" value="C:ribosome"/>
    <property type="evidence" value="ECO:0007669"/>
    <property type="project" value="UniProtKB-KW"/>
</dbReference>
<dbReference type="GO" id="GO:0003735">
    <property type="term" value="F:structural constituent of ribosome"/>
    <property type="evidence" value="ECO:0007669"/>
    <property type="project" value="InterPro"/>
</dbReference>
<dbReference type="GO" id="GO:0006412">
    <property type="term" value="P:translation"/>
    <property type="evidence" value="ECO:0007669"/>
    <property type="project" value="UniProtKB-UniRule"/>
</dbReference>
<dbReference type="HAMAP" id="MF_00359">
    <property type="entry name" value="Ribosomal_eS1"/>
    <property type="match status" value="1"/>
</dbReference>
<dbReference type="InterPro" id="IPR001593">
    <property type="entry name" value="Ribosomal_eS1"/>
</dbReference>
<dbReference type="InterPro" id="IPR030838">
    <property type="entry name" value="Ribosomal_eS1_arc"/>
</dbReference>
<dbReference type="NCBIfam" id="NF003142">
    <property type="entry name" value="PRK04057.1"/>
    <property type="match status" value="1"/>
</dbReference>
<dbReference type="Pfam" id="PF01015">
    <property type="entry name" value="Ribosomal_S3Ae"/>
    <property type="match status" value="1"/>
</dbReference>
<dbReference type="SMART" id="SM01397">
    <property type="entry name" value="Ribosomal_S3Ae"/>
    <property type="match status" value="1"/>
</dbReference>
<protein>
    <recommendedName>
        <fullName evidence="1">Small ribosomal subunit protein eS1</fullName>
    </recommendedName>
    <alternativeName>
        <fullName evidence="2">30S ribosomal protein S3Ae</fullName>
    </alternativeName>
    <alternativeName>
        <fullName evidence="1">Ribosomal protein S1e</fullName>
    </alternativeName>
</protein>